<name>MDH_CROS8</name>
<protein>
    <recommendedName>
        <fullName evidence="1">Malate dehydrogenase</fullName>
        <ecNumber evidence="1">1.1.1.37</ecNumber>
    </recommendedName>
</protein>
<comment type="function">
    <text evidence="1">Catalyzes the reversible oxidation of malate to oxaloacetate.</text>
</comment>
<comment type="catalytic activity">
    <reaction evidence="1">
        <text>(S)-malate + NAD(+) = oxaloacetate + NADH + H(+)</text>
        <dbReference type="Rhea" id="RHEA:21432"/>
        <dbReference type="ChEBI" id="CHEBI:15378"/>
        <dbReference type="ChEBI" id="CHEBI:15589"/>
        <dbReference type="ChEBI" id="CHEBI:16452"/>
        <dbReference type="ChEBI" id="CHEBI:57540"/>
        <dbReference type="ChEBI" id="CHEBI:57945"/>
        <dbReference type="EC" id="1.1.1.37"/>
    </reaction>
</comment>
<comment type="subunit">
    <text evidence="1">Homodimer.</text>
</comment>
<comment type="similarity">
    <text evidence="1">Belongs to the LDH/MDH superfamily. MDH type 1 family.</text>
</comment>
<accession>A7MNR3</accession>
<proteinExistence type="inferred from homology"/>
<dbReference type="EC" id="1.1.1.37" evidence="1"/>
<dbReference type="EMBL" id="CP000783">
    <property type="protein sequence ID" value="ABU78832.1"/>
    <property type="molecule type" value="Genomic_DNA"/>
</dbReference>
<dbReference type="RefSeq" id="WP_004385118.1">
    <property type="nucleotide sequence ID" value="NC_009778.1"/>
</dbReference>
<dbReference type="SMR" id="A7MNR3"/>
<dbReference type="GeneID" id="56732278"/>
<dbReference type="KEGG" id="esa:ESA_03622"/>
<dbReference type="HOGENOM" id="CLU_047181_0_1_6"/>
<dbReference type="Proteomes" id="UP000000260">
    <property type="component" value="Chromosome"/>
</dbReference>
<dbReference type="GO" id="GO:0005737">
    <property type="term" value="C:cytoplasm"/>
    <property type="evidence" value="ECO:0007669"/>
    <property type="project" value="TreeGrafter"/>
</dbReference>
<dbReference type="GO" id="GO:0030060">
    <property type="term" value="F:L-malate dehydrogenase (NAD+) activity"/>
    <property type="evidence" value="ECO:0007669"/>
    <property type="project" value="UniProtKB-UniRule"/>
</dbReference>
<dbReference type="GO" id="GO:0006108">
    <property type="term" value="P:malate metabolic process"/>
    <property type="evidence" value="ECO:0007669"/>
    <property type="project" value="InterPro"/>
</dbReference>
<dbReference type="GO" id="GO:0006099">
    <property type="term" value="P:tricarboxylic acid cycle"/>
    <property type="evidence" value="ECO:0007669"/>
    <property type="project" value="UniProtKB-UniRule"/>
</dbReference>
<dbReference type="CDD" id="cd01337">
    <property type="entry name" value="MDH_glyoxysomal_mitochondrial"/>
    <property type="match status" value="1"/>
</dbReference>
<dbReference type="FunFam" id="3.40.50.720:FF:000017">
    <property type="entry name" value="Malate dehydrogenase"/>
    <property type="match status" value="1"/>
</dbReference>
<dbReference type="FunFam" id="3.90.110.10:FF:000001">
    <property type="entry name" value="Malate dehydrogenase"/>
    <property type="match status" value="1"/>
</dbReference>
<dbReference type="Gene3D" id="3.90.110.10">
    <property type="entry name" value="Lactate dehydrogenase/glycoside hydrolase, family 4, C-terminal"/>
    <property type="match status" value="1"/>
</dbReference>
<dbReference type="Gene3D" id="3.40.50.720">
    <property type="entry name" value="NAD(P)-binding Rossmann-like Domain"/>
    <property type="match status" value="1"/>
</dbReference>
<dbReference type="HAMAP" id="MF_01516">
    <property type="entry name" value="Malate_dehydrog_1"/>
    <property type="match status" value="1"/>
</dbReference>
<dbReference type="InterPro" id="IPR001557">
    <property type="entry name" value="L-lactate/malate_DH"/>
</dbReference>
<dbReference type="InterPro" id="IPR022383">
    <property type="entry name" value="Lactate/malate_DH_C"/>
</dbReference>
<dbReference type="InterPro" id="IPR001236">
    <property type="entry name" value="Lactate/malate_DH_N"/>
</dbReference>
<dbReference type="InterPro" id="IPR015955">
    <property type="entry name" value="Lactate_DH/Glyco_Ohase_4_C"/>
</dbReference>
<dbReference type="InterPro" id="IPR001252">
    <property type="entry name" value="Malate_DH_AS"/>
</dbReference>
<dbReference type="InterPro" id="IPR010097">
    <property type="entry name" value="Malate_DH_type1"/>
</dbReference>
<dbReference type="InterPro" id="IPR023958">
    <property type="entry name" value="Malate_DH_type1_bac"/>
</dbReference>
<dbReference type="InterPro" id="IPR036291">
    <property type="entry name" value="NAD(P)-bd_dom_sf"/>
</dbReference>
<dbReference type="NCBIfam" id="TIGR01772">
    <property type="entry name" value="MDH_euk_gproteo"/>
    <property type="match status" value="1"/>
</dbReference>
<dbReference type="PANTHER" id="PTHR11540">
    <property type="entry name" value="MALATE AND LACTATE DEHYDROGENASE"/>
    <property type="match status" value="1"/>
</dbReference>
<dbReference type="PANTHER" id="PTHR11540:SF16">
    <property type="entry name" value="MALATE DEHYDROGENASE, MITOCHONDRIAL"/>
    <property type="match status" value="1"/>
</dbReference>
<dbReference type="Pfam" id="PF02866">
    <property type="entry name" value="Ldh_1_C"/>
    <property type="match status" value="1"/>
</dbReference>
<dbReference type="Pfam" id="PF00056">
    <property type="entry name" value="Ldh_1_N"/>
    <property type="match status" value="1"/>
</dbReference>
<dbReference type="PIRSF" id="PIRSF000102">
    <property type="entry name" value="Lac_mal_DH"/>
    <property type="match status" value="1"/>
</dbReference>
<dbReference type="SUPFAM" id="SSF56327">
    <property type="entry name" value="LDH C-terminal domain-like"/>
    <property type="match status" value="1"/>
</dbReference>
<dbReference type="SUPFAM" id="SSF51735">
    <property type="entry name" value="NAD(P)-binding Rossmann-fold domains"/>
    <property type="match status" value="1"/>
</dbReference>
<dbReference type="PROSITE" id="PS00068">
    <property type="entry name" value="MDH"/>
    <property type="match status" value="1"/>
</dbReference>
<keyword id="KW-0520">NAD</keyword>
<keyword id="KW-0560">Oxidoreductase</keyword>
<keyword id="KW-1185">Reference proteome</keyword>
<keyword id="KW-0816">Tricarboxylic acid cycle</keyword>
<reference key="1">
    <citation type="journal article" date="2010" name="PLoS ONE">
        <title>Genome sequence of Cronobacter sakazakii BAA-894 and comparative genomic hybridization analysis with other Cronobacter species.</title>
        <authorList>
            <person name="Kucerova E."/>
            <person name="Clifton S.W."/>
            <person name="Xia X.Q."/>
            <person name="Long F."/>
            <person name="Porwollik S."/>
            <person name="Fulton L."/>
            <person name="Fronick C."/>
            <person name="Minx P."/>
            <person name="Kyung K."/>
            <person name="Warren W."/>
            <person name="Fulton R."/>
            <person name="Feng D."/>
            <person name="Wollam A."/>
            <person name="Shah N."/>
            <person name="Bhonagiri V."/>
            <person name="Nash W.E."/>
            <person name="Hallsworth-Pepin K."/>
            <person name="Wilson R.K."/>
            <person name="McClelland M."/>
            <person name="Forsythe S.J."/>
        </authorList>
    </citation>
    <scope>NUCLEOTIDE SEQUENCE [LARGE SCALE GENOMIC DNA]</scope>
    <source>
        <strain>ATCC BAA-894</strain>
    </source>
</reference>
<sequence>MKVAVLGAAGGIGQALALLLKTQLPSGSELSLYDIAPVTPGVAVDLSHIPTDVKIKGFSGEDAKPALEGADVVLISAGVARKPGMDRSDLFNVNAGIVKNLIQQVATTCPKACIGIITNPVNTTVAIAAEVLKKAGVYDKNKLFGVTTLDIIRSNTFVAELKGKKPAELDVPVIGGHSGVTILPLLSQIPGVNFTDQEVADLTKRIQNAGTEVVEAKAGGGSATLSMGQAAARFGLSLVRALQGEQGVVECAYVEGDGEYARFFSQPLLLGKNGIEERKPIGTLSAYEQQALEGMLDTLKKDIALGEEFVNK</sequence>
<feature type="chain" id="PRO_1000068588" description="Malate dehydrogenase">
    <location>
        <begin position="1"/>
        <end position="312"/>
    </location>
</feature>
<feature type="active site" description="Proton acceptor" evidence="1">
    <location>
        <position position="177"/>
    </location>
</feature>
<feature type="binding site" evidence="1">
    <location>
        <begin position="7"/>
        <end position="13"/>
    </location>
    <ligand>
        <name>NAD(+)</name>
        <dbReference type="ChEBI" id="CHEBI:57540"/>
    </ligand>
</feature>
<feature type="binding site" evidence="1">
    <location>
        <position position="34"/>
    </location>
    <ligand>
        <name>NAD(+)</name>
        <dbReference type="ChEBI" id="CHEBI:57540"/>
    </ligand>
</feature>
<feature type="binding site" evidence="1">
    <location>
        <position position="81"/>
    </location>
    <ligand>
        <name>substrate</name>
    </ligand>
</feature>
<feature type="binding site" evidence="1">
    <location>
        <position position="87"/>
    </location>
    <ligand>
        <name>substrate</name>
    </ligand>
</feature>
<feature type="binding site" evidence="1">
    <location>
        <position position="94"/>
    </location>
    <ligand>
        <name>NAD(+)</name>
        <dbReference type="ChEBI" id="CHEBI:57540"/>
    </ligand>
</feature>
<feature type="binding site" evidence="1">
    <location>
        <begin position="117"/>
        <end position="119"/>
    </location>
    <ligand>
        <name>NAD(+)</name>
        <dbReference type="ChEBI" id="CHEBI:57540"/>
    </ligand>
</feature>
<feature type="binding site" evidence="1">
    <location>
        <position position="119"/>
    </location>
    <ligand>
        <name>substrate</name>
    </ligand>
</feature>
<feature type="binding site" evidence="1">
    <location>
        <position position="153"/>
    </location>
    <ligand>
        <name>substrate</name>
    </ligand>
</feature>
<feature type="binding site" evidence="1">
    <location>
        <position position="227"/>
    </location>
    <ligand>
        <name>NAD(+)</name>
        <dbReference type="ChEBI" id="CHEBI:57540"/>
    </ligand>
</feature>
<gene>
    <name evidence="1" type="primary">mdh</name>
    <name type="ordered locus">ESA_03622</name>
</gene>
<evidence type="ECO:0000255" key="1">
    <source>
        <dbReference type="HAMAP-Rule" id="MF_01516"/>
    </source>
</evidence>
<organism>
    <name type="scientific">Cronobacter sakazakii (strain ATCC BAA-894)</name>
    <name type="common">Enterobacter sakazakii</name>
    <dbReference type="NCBI Taxonomy" id="290339"/>
    <lineage>
        <taxon>Bacteria</taxon>
        <taxon>Pseudomonadati</taxon>
        <taxon>Pseudomonadota</taxon>
        <taxon>Gammaproteobacteria</taxon>
        <taxon>Enterobacterales</taxon>
        <taxon>Enterobacteriaceae</taxon>
        <taxon>Cronobacter</taxon>
    </lineage>
</organism>